<name>TX806_LYCSI</name>
<accession>B6DCX7</accession>
<protein>
    <recommendedName>
        <fullName>U8-lycotoxin-Ls1t</fullName>
    </recommendedName>
    <alternativeName>
        <fullName>Toxin-like structure LSTX-H6</fullName>
    </alternativeName>
</protein>
<organism>
    <name type="scientific">Lycosa singoriensis</name>
    <name type="common">Wolf spider</name>
    <name type="synonym">Aranea singoriensis</name>
    <dbReference type="NCBI Taxonomy" id="434756"/>
    <lineage>
        <taxon>Eukaryota</taxon>
        <taxon>Metazoa</taxon>
        <taxon>Ecdysozoa</taxon>
        <taxon>Arthropoda</taxon>
        <taxon>Chelicerata</taxon>
        <taxon>Arachnida</taxon>
        <taxon>Araneae</taxon>
        <taxon>Araneomorphae</taxon>
        <taxon>Entelegynae</taxon>
        <taxon>Lycosoidea</taxon>
        <taxon>Lycosidae</taxon>
        <taxon>Lycosa</taxon>
    </lineage>
</organism>
<sequence>MKLIIFTGLVLFAIVSLIEAQAENEKACLPQYQVCTDAPGNCCSNLVCDCYGRYKSGTRIGRNCFCLQKGVIYKREN</sequence>
<reference key="1">
    <citation type="journal article" date="2010" name="Zoology">
        <title>Transcriptome analysis of the venom glands of the Chinese wolf spider Lycosa singoriensis.</title>
        <authorList>
            <person name="Zhang Y."/>
            <person name="Chen J."/>
            <person name="Tang X."/>
            <person name="Wang F."/>
            <person name="Jiang L."/>
            <person name="Xiong X."/>
            <person name="Wang M."/>
            <person name="Rong M."/>
            <person name="Liu Z."/>
            <person name="Liang S."/>
        </authorList>
    </citation>
    <scope>NUCLEOTIDE SEQUENCE [LARGE SCALE MRNA]</scope>
    <source>
        <tissue>Venom gland</tissue>
    </source>
</reference>
<evidence type="ECO:0000250" key="1"/>
<evidence type="ECO:0000255" key="2"/>
<evidence type="ECO:0000305" key="3"/>
<feature type="signal peptide" evidence="2">
    <location>
        <begin position="1"/>
        <end position="20"/>
    </location>
</feature>
<feature type="propeptide" id="PRO_0000401775" evidence="1">
    <location>
        <begin position="21"/>
        <end position="26"/>
    </location>
</feature>
<feature type="chain" id="PRO_0000401776" description="U8-lycotoxin-Ls1t">
    <location>
        <begin position="27"/>
        <end position="77"/>
    </location>
</feature>
<proteinExistence type="evidence at transcript level"/>
<keyword id="KW-1015">Disulfide bond</keyword>
<keyword id="KW-0964">Secreted</keyword>
<keyword id="KW-0732">Signal</keyword>
<keyword id="KW-0800">Toxin</keyword>
<dbReference type="EMBL" id="EU926061">
    <property type="protein sequence ID" value="ACI41393.1"/>
    <property type="molecule type" value="mRNA"/>
</dbReference>
<dbReference type="EMBL" id="FM864065">
    <property type="protein sequence ID" value="CAS03662.1"/>
    <property type="molecule type" value="mRNA"/>
</dbReference>
<dbReference type="SMR" id="B6DCX7"/>
<dbReference type="ArachnoServer" id="AS001001">
    <property type="toxin name" value="U8-lycotoxin-Ls1t"/>
</dbReference>
<dbReference type="GO" id="GO:0005576">
    <property type="term" value="C:extracellular region"/>
    <property type="evidence" value="ECO:0007669"/>
    <property type="project" value="UniProtKB-SubCell"/>
</dbReference>
<dbReference type="GO" id="GO:0090729">
    <property type="term" value="F:toxin activity"/>
    <property type="evidence" value="ECO:0007669"/>
    <property type="project" value="UniProtKB-KW"/>
</dbReference>
<dbReference type="InterPro" id="IPR019553">
    <property type="entry name" value="Spider_toxin_CSTX_knottin"/>
</dbReference>
<dbReference type="Pfam" id="PF10530">
    <property type="entry name" value="Toxin_35"/>
    <property type="match status" value="1"/>
</dbReference>
<comment type="subcellular location">
    <subcellularLocation>
        <location evidence="1">Secreted</location>
    </subcellularLocation>
</comment>
<comment type="tissue specificity">
    <text>Expressed by the venom gland.</text>
</comment>
<comment type="PTM">
    <text evidence="1">Contains 4 disulfide bonds.</text>
</comment>
<comment type="similarity">
    <text evidence="3">Belongs to the neurotoxin 19 (CSTX) family. 08 (U8-Lctx) subfamily.</text>
</comment>